<organism>
    <name type="scientific">Pan troglodytes</name>
    <name type="common">Chimpanzee</name>
    <dbReference type="NCBI Taxonomy" id="9598"/>
    <lineage>
        <taxon>Eukaryota</taxon>
        <taxon>Metazoa</taxon>
        <taxon>Chordata</taxon>
        <taxon>Craniata</taxon>
        <taxon>Vertebrata</taxon>
        <taxon>Euteleostomi</taxon>
        <taxon>Mammalia</taxon>
        <taxon>Eutheria</taxon>
        <taxon>Euarchontoglires</taxon>
        <taxon>Primates</taxon>
        <taxon>Haplorrhini</taxon>
        <taxon>Catarrhini</taxon>
        <taxon>Hominidae</taxon>
        <taxon>Pan</taxon>
    </lineage>
</organism>
<evidence type="ECO:0000250" key="1">
    <source>
        <dbReference type="UniProtKB" id="O00483"/>
    </source>
</evidence>
<evidence type="ECO:0000250" key="2">
    <source>
        <dbReference type="UniProtKB" id="Q62425"/>
    </source>
</evidence>
<evidence type="ECO:0000305" key="3"/>
<reference key="1">
    <citation type="journal article" date="2006" name="Gene">
        <title>Adaptive selection of mitochondrial complex I subunits during primate radiation.</title>
        <authorList>
            <person name="Mishmar D."/>
            <person name="Ruiz-Pesini E."/>
            <person name="Mondragon-Palomino M."/>
            <person name="Procaccio V."/>
            <person name="Gaut B."/>
            <person name="Wallace D.C."/>
        </authorList>
    </citation>
    <scope>NUCLEOTIDE SEQUENCE [MRNA]</scope>
</reference>
<sequence length="81" mass="9370">MLRQIIGQAKKHPSLIPLFVFIGTGATGATLYLLRLALFNPDVCWDRNNPEPWNKLGPNDQYKFYSVNVDYSKLKKERPDF</sequence>
<comment type="function">
    <text evidence="1">Component of the cytochrome c oxidase, the last enzyme in the mitochondrial electron transport chain which drives oxidative phosphorylation. The respiratory chain contains 3 multisubunit complexes succinate dehydrogenase (complex II, CII), ubiquinol-cytochrome c oxidoreductase (cytochrome b-c1 complex, complex III, CIII) and cytochrome c oxidase (complex IV, CIV), that cooperate to transfer electrons derived from NADH and succinate to molecular oxygen, creating an electrochemical gradient over the inner membrane that drives transmembrane transport and the ATP synthase. Cytochrome c oxidase is the component of the respiratory chain that catalyzes the reduction of oxygen to water. Electrons originating from reduced cytochrome c in the intermembrane space (IMS) are transferred via the dinuclear copper A center (CU(A)) of subunit 2 and heme A of subunit 1 to the active site in subunit 1, a binuclear center (BNC) formed by heme A3 and copper B (CU(B)). The BNC reduces molecular oxygen to 2 water molecules unsing 4 electrons from cytochrome c in the IMS and 4 protons from the mitochondrial matrix. NDUFA4 is required for complex IV maintenance.</text>
</comment>
<comment type="subunit">
    <text evidence="1 2">Component of the cytochrome c oxidase (complex IV, CIV), a multisubunit enzyme composed of 14 subunits. The complex is composed of a catalytic core of 3 subunits MT-CO1, MT-CO2 and MT-CO3, encoded in the mitochondrial DNA, and 11 supernumerary subunits COX4I, COX5A, COX5B, COX6A, COX6B, COX6C, COX7A, COX7B, COX7C, COX8 and NDUFA4, which are encoded in the nuclear genome. The complex exists as a monomer or a dimer and forms supercomplexes (SCs) in the inner mitochondrial membrane with NADH-ubiquinone oxidoreductase (complex I, CI) and ubiquinol-cytochrome c oxidoreductase (cytochrome b-c1 complex, complex III, CIII), resulting in different assemblies (supercomplex SCI(1)III(2)IV(1) and megacomplex MCI(2)III(2)IV(2)) (By similarity). Interacts with RAB5IF (By similarity). Interacts with FLVCR2; this interaction occurs in the absence of heme and is disrupted upon heme binding.</text>
</comment>
<comment type="subcellular location">
    <subcellularLocation>
        <location evidence="1">Mitochondrion inner membrane</location>
        <topology evidence="1">Single-pass membrane protein</topology>
    </subcellularLocation>
</comment>
<comment type="similarity">
    <text evidence="3">Belongs to the complex IV NDUFA4 subunit family.</text>
</comment>
<dbReference type="EMBL" id="DQ885735">
    <property type="protein sequence ID" value="ABH12244.1"/>
    <property type="molecule type" value="mRNA"/>
</dbReference>
<dbReference type="RefSeq" id="NP_001073393.1">
    <property type="nucleotide sequence ID" value="NM_001079924.2"/>
</dbReference>
<dbReference type="SMR" id="Q0MQ99"/>
<dbReference type="FunCoup" id="Q0MQ99">
    <property type="interactions" value="854"/>
</dbReference>
<dbReference type="STRING" id="9598.ENSPTRP00000080688"/>
<dbReference type="PaxDb" id="9598-ENSPTRP00000032349"/>
<dbReference type="Ensembl" id="ENSPTRT00000099418.1">
    <property type="protein sequence ID" value="ENSPTRP00000080688.1"/>
    <property type="gene ID" value="ENSPTRG00000048565.1"/>
</dbReference>
<dbReference type="GeneID" id="741211"/>
<dbReference type="KEGG" id="ptr:741211"/>
<dbReference type="CTD" id="4697"/>
<dbReference type="eggNOG" id="ENOG502S65P">
    <property type="taxonomic scope" value="Eukaryota"/>
</dbReference>
<dbReference type="GeneTree" id="ENSGT00940000154268"/>
<dbReference type="HOGENOM" id="CLU_181002_0_0_1"/>
<dbReference type="InParanoid" id="Q0MQ99"/>
<dbReference type="OMA" id="GPNQYKF"/>
<dbReference type="OrthoDB" id="591at9604"/>
<dbReference type="TreeFam" id="TF106383"/>
<dbReference type="Proteomes" id="UP000002277">
    <property type="component" value="Chromosome 7"/>
</dbReference>
<dbReference type="Bgee" id="ENSPTRG00000048565">
    <property type="expression patterns" value="Expressed in primary visual cortex and 21 other cell types or tissues"/>
</dbReference>
<dbReference type="GO" id="GO:0005743">
    <property type="term" value="C:mitochondrial inner membrane"/>
    <property type="evidence" value="ECO:0007669"/>
    <property type="project" value="UniProtKB-SubCell"/>
</dbReference>
<dbReference type="GO" id="GO:0045277">
    <property type="term" value="C:respiratory chain complex IV"/>
    <property type="evidence" value="ECO:0000250"/>
    <property type="project" value="UniProtKB"/>
</dbReference>
<dbReference type="GO" id="GO:0044877">
    <property type="term" value="F:protein-containing complex binding"/>
    <property type="evidence" value="ECO:0007669"/>
    <property type="project" value="Ensembl"/>
</dbReference>
<dbReference type="InterPro" id="IPR010530">
    <property type="entry name" value="B12D"/>
</dbReference>
<dbReference type="PANTHER" id="PTHR14256:SF4">
    <property type="entry name" value="CYTOCHROME C OXIDASE SUBUNIT NDUFA4"/>
    <property type="match status" value="1"/>
</dbReference>
<dbReference type="PANTHER" id="PTHR14256">
    <property type="entry name" value="NADH-UBIQUINONE OXIDOREDUCTASE MLRQ SUBUNIT"/>
    <property type="match status" value="1"/>
</dbReference>
<dbReference type="Pfam" id="PF06522">
    <property type="entry name" value="B12D"/>
    <property type="match status" value="1"/>
</dbReference>
<accession>Q0MQ99</accession>
<proteinExistence type="inferred from homology"/>
<keyword id="KW-0007">Acetylation</keyword>
<keyword id="KW-0249">Electron transport</keyword>
<keyword id="KW-0472">Membrane</keyword>
<keyword id="KW-0496">Mitochondrion</keyword>
<keyword id="KW-0999">Mitochondrion inner membrane</keyword>
<keyword id="KW-0597">Phosphoprotein</keyword>
<keyword id="KW-1185">Reference proteome</keyword>
<keyword id="KW-0679">Respiratory chain</keyword>
<keyword id="KW-0812">Transmembrane</keyword>
<keyword id="KW-1133">Transmembrane helix</keyword>
<keyword id="KW-0813">Transport</keyword>
<gene>
    <name type="primary">NDUFA4</name>
</gene>
<name>NDUA4_PANTR</name>
<protein>
    <recommendedName>
        <fullName>Cytochrome c oxidase subunit NDUFA4</fullName>
    </recommendedName>
</protein>
<feature type="chain" id="PRO_0000251165" description="Cytochrome c oxidase subunit NDUFA4">
    <location>
        <begin position="1"/>
        <end position="81"/>
    </location>
</feature>
<feature type="topological domain" description="Mitochondrial matrix" evidence="1">
    <location>
        <begin position="1"/>
        <end position="14"/>
    </location>
</feature>
<feature type="transmembrane region" description="Helical" evidence="1">
    <location>
        <begin position="15"/>
        <end position="37"/>
    </location>
</feature>
<feature type="topological domain" description="Mitochondrial intermembrane" evidence="1">
    <location>
        <begin position="38"/>
        <end position="81"/>
    </location>
</feature>
<feature type="modified residue" description="N6-acetyllysine" evidence="2">
    <location>
        <position position="10"/>
    </location>
</feature>
<feature type="modified residue" description="Phosphoserine" evidence="1">
    <location>
        <position position="66"/>
    </location>
</feature>